<proteinExistence type="evidence at protein level"/>
<protein>
    <recommendedName>
        <fullName>Dentinal fluid transport-stimulating peptide</fullName>
        <shortName>DFT-stimulating peptide</shortName>
    </recommendedName>
</protein>
<feature type="peptide" id="PRO_0000044130" description="Dentinal fluid transport-stimulating peptide">
    <location>
        <begin position="1"/>
        <end position="20"/>
    </location>
</feature>
<feature type="region of interest" description="Disordered" evidence="1">
    <location>
        <begin position="1"/>
        <end position="20"/>
    </location>
</feature>
<feature type="compositionally biased region" description="Basic and acidic residues" evidence="1">
    <location>
        <begin position="8"/>
        <end position="20"/>
    </location>
</feature>
<name>DFTS_RAT</name>
<accession>P07448</accession>
<sequence>GVIAWELQHNEPGRKDSTAG</sequence>
<dbReference type="PIR" id="JJ0001">
    <property type="entry name" value="DIRT"/>
</dbReference>
<dbReference type="InParanoid" id="P07448"/>
<dbReference type="Proteomes" id="UP000002494">
    <property type="component" value="Unplaced"/>
</dbReference>
<dbReference type="GO" id="GO:0005179">
    <property type="term" value="F:hormone activity"/>
    <property type="evidence" value="ECO:0007669"/>
    <property type="project" value="UniProtKB-KW"/>
</dbReference>
<keyword id="KW-0214">Dental caries</keyword>
<keyword id="KW-0903">Direct protein sequencing</keyword>
<keyword id="KW-0372">Hormone</keyword>
<keyword id="KW-1185">Reference proteome</keyword>
<organism>
    <name type="scientific">Rattus norvegicus</name>
    <name type="common">Rat</name>
    <dbReference type="NCBI Taxonomy" id="10116"/>
    <lineage>
        <taxon>Eukaryota</taxon>
        <taxon>Metazoa</taxon>
        <taxon>Chordata</taxon>
        <taxon>Craniata</taxon>
        <taxon>Vertebrata</taxon>
        <taxon>Euteleostomi</taxon>
        <taxon>Mammalia</taxon>
        <taxon>Eutheria</taxon>
        <taxon>Euarchontoglires</taxon>
        <taxon>Glires</taxon>
        <taxon>Rodentia</taxon>
        <taxon>Myomorpha</taxon>
        <taxon>Muroidea</taxon>
        <taxon>Muridae</taxon>
        <taxon>Murinae</taxon>
        <taxon>Rattus</taxon>
    </lineage>
</organism>
<comment type="function">
    <text>This peptide stimulates the transport of dentinal fluid, which is important for the prevention of dental caries.</text>
</comment>
<reference key="1">
    <citation type="journal article" date="1986" name="Chem. Pharm. Bull.">
        <title>Isolation and amino acid sequence of dentinal fluid transport-stimulating peptide from rat parotid glands.</title>
        <authorList>
            <person name="Yamamoto T."/>
            <person name="Kobayashi M."/>
            <person name="Kobayashi M."/>
            <person name="Yamamoto M."/>
            <person name="Nomura M."/>
            <person name="Aonuma S."/>
        </authorList>
    </citation>
    <scope>PROTEIN SEQUENCE</scope>
    <source>
        <tissue>Parotid gland</tissue>
    </source>
</reference>
<reference key="2">
    <citation type="journal article" date="1967" name="J. South. Calif. Dent. Assoc.">
        <title>The movement of acriflavine hydrochloride through molars of rats on a cariogenic and non-cariogenic diet.</title>
        <authorList>
            <person name="Steinman R.R."/>
        </authorList>
    </citation>
    <scope>CHARACTERIZATION</scope>
</reference>
<evidence type="ECO:0000256" key="1">
    <source>
        <dbReference type="SAM" id="MobiDB-lite"/>
    </source>
</evidence>